<name>EF1D1_ORYSJ</name>
<protein>
    <recommendedName>
        <fullName>Elongation factor 1-delta 1</fullName>
        <shortName>EF-1-delta 1</shortName>
    </recommendedName>
    <alternativeName>
        <fullName>Elongation factor 1B-beta 1</fullName>
    </alternativeName>
    <alternativeName>
        <fullName>eEF-1B beta 1</fullName>
    </alternativeName>
</protein>
<gene>
    <name type="ordered locus">Os07g0614500</name>
    <name type="ordered locus">LOC_Os07g42300</name>
    <name type="ORF">P0616D06.117</name>
</gene>
<keyword id="KW-0251">Elongation factor</keyword>
<keyword id="KW-0648">Protein biosynthesis</keyword>
<keyword id="KW-1185">Reference proteome</keyword>
<sequence length="229" mass="24863">MAVSFTNVSSEAGLKKLDEYLLTRSYISGYQASNDDLAVYSAFSTAPSSSYTNVARWFTHIDALLRLSGVTADGQGVKVESTAVPSASTPDVADAKAPAADDDDDDDVDLFGEETEEEKKAAEERAAAVKASGKKKESGKSSVLLDVKPWDDETDMTKLEEAVRNVKMEGLLWGASKLVPVGYGIKKLQIMMTIVDDLVSVDSLIEDYFYTEPANEYIQSCDIVAFNKI</sequence>
<accession>Q40680</accession>
<accession>Q0D4P5</accession>
<accession>Q7EYW8</accession>
<feature type="initiator methionine" description="Removed" evidence="1">
    <location>
        <position position="1"/>
    </location>
</feature>
<feature type="chain" id="PRO_0000155037" description="Elongation factor 1-delta 1">
    <location>
        <begin position="2"/>
        <end position="229"/>
    </location>
</feature>
<feature type="region of interest" description="Disordered" evidence="2">
    <location>
        <begin position="80"/>
        <end position="109"/>
    </location>
</feature>
<feature type="compositionally biased region" description="Acidic residues" evidence="2">
    <location>
        <begin position="100"/>
        <end position="109"/>
    </location>
</feature>
<comment type="function">
    <text>EF-1-beta and EF-1-beta' stimulate the exchange of GDP bound to EF-1-alpha to GTP.</text>
</comment>
<comment type="subunit">
    <text evidence="1">EF-1 is composed of 4 subunits: alpha, beta (1B-alpha=beta'), delta (1B-beta), and gamma (1B-gamma).</text>
</comment>
<comment type="similarity">
    <text evidence="3">Belongs to the EF-1-beta/EF-1-delta family.</text>
</comment>
<evidence type="ECO:0000250" key="1"/>
<evidence type="ECO:0000256" key="2">
    <source>
        <dbReference type="SAM" id="MobiDB-lite"/>
    </source>
</evidence>
<evidence type="ECO:0000305" key="3"/>
<dbReference type="EMBL" id="D23674">
    <property type="protein sequence ID" value="BAA04903.1"/>
    <property type="molecule type" value="mRNA"/>
</dbReference>
<dbReference type="EMBL" id="AP005198">
    <property type="protein sequence ID" value="BAC16499.1"/>
    <property type="molecule type" value="Genomic_DNA"/>
</dbReference>
<dbReference type="EMBL" id="AP008213">
    <property type="protein sequence ID" value="BAF22178.1"/>
    <property type="molecule type" value="Genomic_DNA"/>
</dbReference>
<dbReference type="EMBL" id="AP014963">
    <property type="protein sequence ID" value="BAT02636.1"/>
    <property type="molecule type" value="Genomic_DNA"/>
</dbReference>
<dbReference type="EMBL" id="AK061069">
    <property type="protein sequence ID" value="BAG87710.1"/>
    <property type="molecule type" value="mRNA"/>
</dbReference>
<dbReference type="EMBL" id="AK071736">
    <property type="protein sequence ID" value="BAG92661.1"/>
    <property type="molecule type" value="mRNA"/>
</dbReference>
<dbReference type="PIR" id="S41086">
    <property type="entry name" value="S41086"/>
</dbReference>
<dbReference type="RefSeq" id="XP_015647859.1">
    <property type="nucleotide sequence ID" value="XM_015792373.1"/>
</dbReference>
<dbReference type="SMR" id="Q40680"/>
<dbReference type="FunCoup" id="Q40680">
    <property type="interactions" value="3033"/>
</dbReference>
<dbReference type="IntAct" id="Q40680">
    <property type="interactions" value="2"/>
</dbReference>
<dbReference type="STRING" id="39947.Q40680"/>
<dbReference type="PaxDb" id="39947-Q40680"/>
<dbReference type="EnsemblPlants" id="Os07t0614500-01">
    <property type="protein sequence ID" value="Os07t0614500-01"/>
    <property type="gene ID" value="Os07g0614500"/>
</dbReference>
<dbReference type="Gramene" id="Os07t0614500-01">
    <property type="protein sequence ID" value="Os07t0614500-01"/>
    <property type="gene ID" value="Os07g0614500"/>
</dbReference>
<dbReference type="KEGG" id="dosa:Os07g0614500"/>
<dbReference type="eggNOG" id="KOG1668">
    <property type="taxonomic scope" value="Eukaryota"/>
</dbReference>
<dbReference type="HOGENOM" id="CLU_050172_3_0_1"/>
<dbReference type="InParanoid" id="Q40680"/>
<dbReference type="OMA" id="MPSQADM"/>
<dbReference type="OrthoDB" id="331763at2759"/>
<dbReference type="Proteomes" id="UP000000763">
    <property type="component" value="Chromosome 7"/>
</dbReference>
<dbReference type="Proteomes" id="UP000059680">
    <property type="component" value="Chromosome 7"/>
</dbReference>
<dbReference type="ExpressionAtlas" id="Q40680">
    <property type="expression patterns" value="baseline and differential"/>
</dbReference>
<dbReference type="GO" id="GO:0005829">
    <property type="term" value="C:cytosol"/>
    <property type="evidence" value="ECO:0000318"/>
    <property type="project" value="GO_Central"/>
</dbReference>
<dbReference type="GO" id="GO:0005853">
    <property type="term" value="C:eukaryotic translation elongation factor 1 complex"/>
    <property type="evidence" value="ECO:0007669"/>
    <property type="project" value="InterPro"/>
</dbReference>
<dbReference type="GO" id="GO:0005085">
    <property type="term" value="F:guanyl-nucleotide exchange factor activity"/>
    <property type="evidence" value="ECO:0000318"/>
    <property type="project" value="GO_Central"/>
</dbReference>
<dbReference type="GO" id="GO:0003746">
    <property type="term" value="F:translation elongation factor activity"/>
    <property type="evidence" value="ECO:0007669"/>
    <property type="project" value="UniProtKB-KW"/>
</dbReference>
<dbReference type="GO" id="GO:0006414">
    <property type="term" value="P:translational elongation"/>
    <property type="evidence" value="ECO:0000318"/>
    <property type="project" value="GO_Central"/>
</dbReference>
<dbReference type="CDD" id="cd00292">
    <property type="entry name" value="EF1B"/>
    <property type="match status" value="1"/>
</dbReference>
<dbReference type="FunFam" id="3.30.70.60:FF:000001">
    <property type="entry name" value="Elongation factor 1-beta 1 like"/>
    <property type="match status" value="1"/>
</dbReference>
<dbReference type="FunFam" id="1.20.1050.130:FF:000006">
    <property type="entry name" value="Elongation factor 1-delta 1"/>
    <property type="match status" value="1"/>
</dbReference>
<dbReference type="Gene3D" id="1.20.1050.130">
    <property type="match status" value="1"/>
</dbReference>
<dbReference type="Gene3D" id="3.30.70.60">
    <property type="match status" value="1"/>
</dbReference>
<dbReference type="InterPro" id="IPR036219">
    <property type="entry name" value="eEF-1beta-like_sf"/>
</dbReference>
<dbReference type="InterPro" id="IPR049720">
    <property type="entry name" value="EF1B_bsu/dsu"/>
</dbReference>
<dbReference type="InterPro" id="IPR014038">
    <property type="entry name" value="EF1B_bsu/dsu_GNE"/>
</dbReference>
<dbReference type="InterPro" id="IPR036282">
    <property type="entry name" value="Glutathione-S-Trfase_C_sf"/>
</dbReference>
<dbReference type="InterPro" id="IPR014717">
    <property type="entry name" value="Transl_elong_EF1B/ribsomal_bS6"/>
</dbReference>
<dbReference type="InterPro" id="IPR001326">
    <property type="entry name" value="Transl_elong_EF1B_B/D_CS"/>
</dbReference>
<dbReference type="PANTHER" id="PTHR11595">
    <property type="entry name" value="EF-HAND AND COILED-COIL DOMAIN-CONTAINING FAMILY MEMBER"/>
    <property type="match status" value="1"/>
</dbReference>
<dbReference type="PANTHER" id="PTHR11595:SF21">
    <property type="entry name" value="ELONGATION FACTOR 1-BETA"/>
    <property type="match status" value="1"/>
</dbReference>
<dbReference type="Pfam" id="PF00736">
    <property type="entry name" value="EF1_GNE"/>
    <property type="match status" value="1"/>
</dbReference>
<dbReference type="SMART" id="SM00888">
    <property type="entry name" value="EF1_GNE"/>
    <property type="match status" value="1"/>
</dbReference>
<dbReference type="SUPFAM" id="SSF54984">
    <property type="entry name" value="eEF-1beta-like"/>
    <property type="match status" value="1"/>
</dbReference>
<dbReference type="SUPFAM" id="SSF47616">
    <property type="entry name" value="GST C-terminal domain-like"/>
    <property type="match status" value="1"/>
</dbReference>
<dbReference type="PROSITE" id="PS00824">
    <property type="entry name" value="EF1BD_1"/>
    <property type="match status" value="1"/>
</dbReference>
<dbReference type="PROSITE" id="PS00825">
    <property type="entry name" value="EF1BD_2"/>
    <property type="match status" value="1"/>
</dbReference>
<organism>
    <name type="scientific">Oryza sativa subsp. japonica</name>
    <name type="common">Rice</name>
    <dbReference type="NCBI Taxonomy" id="39947"/>
    <lineage>
        <taxon>Eukaryota</taxon>
        <taxon>Viridiplantae</taxon>
        <taxon>Streptophyta</taxon>
        <taxon>Embryophyta</taxon>
        <taxon>Tracheophyta</taxon>
        <taxon>Spermatophyta</taxon>
        <taxon>Magnoliopsida</taxon>
        <taxon>Liliopsida</taxon>
        <taxon>Poales</taxon>
        <taxon>Poaceae</taxon>
        <taxon>BOP clade</taxon>
        <taxon>Oryzoideae</taxon>
        <taxon>Oryzeae</taxon>
        <taxon>Oryzinae</taxon>
        <taxon>Oryza</taxon>
        <taxon>Oryza sativa</taxon>
    </lineage>
</organism>
<proteinExistence type="evidence at transcript level"/>
<reference key="1">
    <citation type="journal article" date="1994" name="FEBS Lett.">
        <title>Cloning and characterization of the cDNA encoding rice elongation factor 1 beta.</title>
        <authorList>
            <person name="Matsumoto S."/>
            <person name="Terui Y."/>
            <person name="Shixiong X."/>
            <person name="Taira H."/>
            <person name="Ejiri S."/>
        </authorList>
    </citation>
    <scope>NUCLEOTIDE SEQUENCE [MRNA]</scope>
    <source>
        <strain>cv. Hayayuki</strain>
        <tissue>Anther</tissue>
    </source>
</reference>
<reference key="2">
    <citation type="journal article" date="2005" name="Nature">
        <title>The map-based sequence of the rice genome.</title>
        <authorList>
            <consortium name="International rice genome sequencing project (IRGSP)"/>
        </authorList>
    </citation>
    <scope>NUCLEOTIDE SEQUENCE [LARGE SCALE GENOMIC DNA]</scope>
    <source>
        <strain>cv. Nipponbare</strain>
    </source>
</reference>
<reference key="3">
    <citation type="journal article" date="2008" name="Nucleic Acids Res.">
        <title>The rice annotation project database (RAP-DB): 2008 update.</title>
        <authorList>
            <consortium name="The rice annotation project (RAP)"/>
        </authorList>
    </citation>
    <scope>GENOME REANNOTATION</scope>
    <source>
        <strain>cv. Nipponbare</strain>
    </source>
</reference>
<reference key="4">
    <citation type="journal article" date="2013" name="Rice">
        <title>Improvement of the Oryza sativa Nipponbare reference genome using next generation sequence and optical map data.</title>
        <authorList>
            <person name="Kawahara Y."/>
            <person name="de la Bastide M."/>
            <person name="Hamilton J.P."/>
            <person name="Kanamori H."/>
            <person name="McCombie W.R."/>
            <person name="Ouyang S."/>
            <person name="Schwartz D.C."/>
            <person name="Tanaka T."/>
            <person name="Wu J."/>
            <person name="Zhou S."/>
            <person name="Childs K.L."/>
            <person name="Davidson R.M."/>
            <person name="Lin H."/>
            <person name="Quesada-Ocampo L."/>
            <person name="Vaillancourt B."/>
            <person name="Sakai H."/>
            <person name="Lee S.S."/>
            <person name="Kim J."/>
            <person name="Numa H."/>
            <person name="Itoh T."/>
            <person name="Buell C.R."/>
            <person name="Matsumoto T."/>
        </authorList>
    </citation>
    <scope>GENOME REANNOTATION</scope>
    <source>
        <strain>cv. Nipponbare</strain>
    </source>
</reference>
<reference key="5">
    <citation type="journal article" date="2003" name="Science">
        <title>Collection, mapping, and annotation of over 28,000 cDNA clones from japonica rice.</title>
        <authorList>
            <consortium name="The rice full-length cDNA consortium"/>
        </authorList>
    </citation>
    <scope>NUCLEOTIDE SEQUENCE [LARGE SCALE MRNA]</scope>
    <source>
        <strain>cv. Nipponbare</strain>
    </source>
</reference>